<comment type="function">
    <text evidence="1">Involved in the biosynthesis of ADP-glucose, a building block required for the elongation reactions to produce glycogen. Catalyzes the reaction between ATP and alpha-D-glucose 1-phosphate (G1P) to produce pyrophosphate and ADP-Glc.</text>
</comment>
<comment type="catalytic activity">
    <reaction evidence="1">
        <text>alpha-D-glucose 1-phosphate + ATP + H(+) = ADP-alpha-D-glucose + diphosphate</text>
        <dbReference type="Rhea" id="RHEA:12120"/>
        <dbReference type="ChEBI" id="CHEBI:15378"/>
        <dbReference type="ChEBI" id="CHEBI:30616"/>
        <dbReference type="ChEBI" id="CHEBI:33019"/>
        <dbReference type="ChEBI" id="CHEBI:57498"/>
        <dbReference type="ChEBI" id="CHEBI:58601"/>
        <dbReference type="EC" id="2.7.7.27"/>
    </reaction>
</comment>
<comment type="pathway">
    <text evidence="1">Glycan biosynthesis; glycogen biosynthesis.</text>
</comment>
<comment type="subunit">
    <text evidence="1">Homotetramer.</text>
</comment>
<comment type="similarity">
    <text evidence="1">Belongs to the bacterial/plant glucose-1-phosphate adenylyltransferase family.</text>
</comment>
<keyword id="KW-0067">ATP-binding</keyword>
<keyword id="KW-0119">Carbohydrate metabolism</keyword>
<keyword id="KW-0320">Glycogen biosynthesis</keyword>
<keyword id="KW-0321">Glycogen metabolism</keyword>
<keyword id="KW-0547">Nucleotide-binding</keyword>
<keyword id="KW-0548">Nucleotidyltransferase</keyword>
<keyword id="KW-0808">Transferase</keyword>
<feature type="chain" id="PRO_1000051593" description="Glucose-1-phosphate adenylyltransferase">
    <location>
        <begin position="1"/>
        <end position="476"/>
    </location>
</feature>
<feature type="binding site" evidence="1">
    <location>
        <position position="114"/>
    </location>
    <ligand>
        <name>alpha-D-glucose 1-phosphate</name>
        <dbReference type="ChEBI" id="CHEBI:58601"/>
    </ligand>
</feature>
<feature type="binding site" evidence="1">
    <location>
        <position position="179"/>
    </location>
    <ligand>
        <name>alpha-D-glucose 1-phosphate</name>
        <dbReference type="ChEBI" id="CHEBI:58601"/>
    </ligand>
</feature>
<feature type="binding site" evidence="1">
    <location>
        <begin position="194"/>
        <end position="195"/>
    </location>
    <ligand>
        <name>alpha-D-glucose 1-phosphate</name>
        <dbReference type="ChEBI" id="CHEBI:58601"/>
    </ligand>
</feature>
<feature type="binding site" evidence="1">
    <location>
        <position position="212"/>
    </location>
    <ligand>
        <name>alpha-D-glucose 1-phosphate</name>
        <dbReference type="ChEBI" id="CHEBI:58601"/>
    </ligand>
</feature>
<sequence>MVRFESTDSLMLARQLPNKTVALILAGGRGSRLKDLTATRAKPAVHFGGKFRIIDFALSNCLNSGVRRIGVITQYQSHTLVQHIQRGWSFLNEEMNEFVDLLPAQQRLSTEQWYKGTADAVCQNLDIIRRYDAEYIVILAGDHIYKMDYSRMLLDHVEKGAECTVACIPVPISEGSEFGIMEVTADYQITAFYEKPANPPPIPGDPSNALASMGIYIFNADYLFKLLEEDNNTPGSSHDFGKDIIPQLTARKVVWAHPFDLSCVTSNAELPPYWRDVGTLDAYWRANLDLASVTPELDMYDRAWPIRTHMEPLPPAKFVQDRSGSHGMTMNSLVSGGCIVSGSVVVHSVLFPRVRVNSFCTIDSSLLLPDVHVGRSCRLRRCIIDRACHIPEGMVIGENADEDSARFYRSEGGGGVSDSGYAGKVRGKIEPLGFLFVRLDLLIRLSLLIRLNLFIRMNLLIILTLFFKLASIQASH</sequence>
<reference key="1">
    <citation type="submission" date="2007-02" db="EMBL/GenBank/DDBJ databases">
        <title>Complete sequence of chromosome of Yersinia pestis Pestoides F.</title>
        <authorList>
            <consortium name="US DOE Joint Genome Institute"/>
            <person name="Copeland A."/>
            <person name="Lucas S."/>
            <person name="Lapidus A."/>
            <person name="Barry K."/>
            <person name="Detter J.C."/>
            <person name="Glavina del Rio T."/>
            <person name="Hammon N."/>
            <person name="Israni S."/>
            <person name="Dalin E."/>
            <person name="Tice H."/>
            <person name="Pitluck S."/>
            <person name="Di Bartolo G."/>
            <person name="Chain P."/>
            <person name="Malfatti S."/>
            <person name="Shin M."/>
            <person name="Vergez L."/>
            <person name="Schmutz J."/>
            <person name="Larimer F."/>
            <person name="Land M."/>
            <person name="Hauser L."/>
            <person name="Worsham P."/>
            <person name="Chu M."/>
            <person name="Bearden S."/>
            <person name="Garcia E."/>
            <person name="Richardson P."/>
        </authorList>
    </citation>
    <scope>NUCLEOTIDE SEQUENCE [LARGE SCALE GENOMIC DNA]</scope>
    <source>
        <strain>Pestoides F</strain>
    </source>
</reference>
<name>GLGC_YERPP</name>
<dbReference type="EC" id="2.7.7.27" evidence="1"/>
<dbReference type="EMBL" id="CP000668">
    <property type="protein sequence ID" value="ABP41662.1"/>
    <property type="molecule type" value="Genomic_DNA"/>
</dbReference>
<dbReference type="SMR" id="A4TQV0"/>
<dbReference type="KEGG" id="ypp:YPDSF_3305"/>
<dbReference type="PATRIC" id="fig|386656.14.peg.1031"/>
<dbReference type="UniPathway" id="UPA00164"/>
<dbReference type="GO" id="GO:0005524">
    <property type="term" value="F:ATP binding"/>
    <property type="evidence" value="ECO:0007669"/>
    <property type="project" value="UniProtKB-KW"/>
</dbReference>
<dbReference type="GO" id="GO:0008878">
    <property type="term" value="F:glucose-1-phosphate adenylyltransferase activity"/>
    <property type="evidence" value="ECO:0007669"/>
    <property type="project" value="UniProtKB-UniRule"/>
</dbReference>
<dbReference type="GO" id="GO:0005978">
    <property type="term" value="P:glycogen biosynthetic process"/>
    <property type="evidence" value="ECO:0007669"/>
    <property type="project" value="UniProtKB-UniRule"/>
</dbReference>
<dbReference type="CDD" id="cd02508">
    <property type="entry name" value="ADP_Glucose_PP"/>
    <property type="match status" value="1"/>
</dbReference>
<dbReference type="CDD" id="cd04651">
    <property type="entry name" value="LbH_G1P_AT_C"/>
    <property type="match status" value="1"/>
</dbReference>
<dbReference type="FunFam" id="3.90.550.10:FF:000014">
    <property type="entry name" value="Glucose-1-phosphate adenylyltransferase"/>
    <property type="match status" value="1"/>
</dbReference>
<dbReference type="Gene3D" id="2.160.10.10">
    <property type="entry name" value="Hexapeptide repeat proteins"/>
    <property type="match status" value="1"/>
</dbReference>
<dbReference type="Gene3D" id="3.90.550.10">
    <property type="entry name" value="Spore Coat Polysaccharide Biosynthesis Protein SpsA, Chain A"/>
    <property type="match status" value="1"/>
</dbReference>
<dbReference type="HAMAP" id="MF_00624">
    <property type="entry name" value="GlgC"/>
    <property type="match status" value="1"/>
</dbReference>
<dbReference type="InterPro" id="IPR011831">
    <property type="entry name" value="ADP-Glc_PPase"/>
</dbReference>
<dbReference type="InterPro" id="IPR005836">
    <property type="entry name" value="ADP_Glu_pyroP_CS"/>
</dbReference>
<dbReference type="InterPro" id="IPR023049">
    <property type="entry name" value="GlgC_bac"/>
</dbReference>
<dbReference type="InterPro" id="IPR056818">
    <property type="entry name" value="GlmU/GlgC-like_hexapep"/>
</dbReference>
<dbReference type="InterPro" id="IPR005835">
    <property type="entry name" value="NTP_transferase_dom"/>
</dbReference>
<dbReference type="InterPro" id="IPR029044">
    <property type="entry name" value="Nucleotide-diphossugar_trans"/>
</dbReference>
<dbReference type="InterPro" id="IPR011004">
    <property type="entry name" value="Trimer_LpxA-like_sf"/>
</dbReference>
<dbReference type="NCBIfam" id="TIGR02091">
    <property type="entry name" value="glgC"/>
    <property type="match status" value="1"/>
</dbReference>
<dbReference type="NCBIfam" id="NF001947">
    <property type="entry name" value="PRK00725.1"/>
    <property type="match status" value="1"/>
</dbReference>
<dbReference type="NCBIfam" id="NF002023">
    <property type="entry name" value="PRK00844.1"/>
    <property type="match status" value="1"/>
</dbReference>
<dbReference type="PANTHER" id="PTHR43523:SF2">
    <property type="entry name" value="GLUCOSE-1-PHOSPHATE ADENYLYLTRANSFERASE"/>
    <property type="match status" value="1"/>
</dbReference>
<dbReference type="PANTHER" id="PTHR43523">
    <property type="entry name" value="GLUCOSE-1-PHOSPHATE ADENYLYLTRANSFERASE-RELATED"/>
    <property type="match status" value="1"/>
</dbReference>
<dbReference type="Pfam" id="PF24894">
    <property type="entry name" value="Hexapep_GlmU"/>
    <property type="match status" value="1"/>
</dbReference>
<dbReference type="Pfam" id="PF00483">
    <property type="entry name" value="NTP_transferase"/>
    <property type="match status" value="1"/>
</dbReference>
<dbReference type="SUPFAM" id="SSF53448">
    <property type="entry name" value="Nucleotide-diphospho-sugar transferases"/>
    <property type="match status" value="1"/>
</dbReference>
<dbReference type="SUPFAM" id="SSF51161">
    <property type="entry name" value="Trimeric LpxA-like enzymes"/>
    <property type="match status" value="1"/>
</dbReference>
<dbReference type="PROSITE" id="PS00808">
    <property type="entry name" value="ADP_GLC_PYROPHOSPH_1"/>
    <property type="match status" value="1"/>
</dbReference>
<dbReference type="PROSITE" id="PS00809">
    <property type="entry name" value="ADP_GLC_PYROPHOSPH_2"/>
    <property type="match status" value="1"/>
</dbReference>
<dbReference type="PROSITE" id="PS00810">
    <property type="entry name" value="ADP_GLC_PYROPHOSPH_3"/>
    <property type="match status" value="1"/>
</dbReference>
<gene>
    <name evidence="1" type="primary">glgC</name>
    <name type="ordered locus">YPDSF_3305</name>
</gene>
<proteinExistence type="inferred from homology"/>
<organism>
    <name type="scientific">Yersinia pestis (strain Pestoides F)</name>
    <dbReference type="NCBI Taxonomy" id="386656"/>
    <lineage>
        <taxon>Bacteria</taxon>
        <taxon>Pseudomonadati</taxon>
        <taxon>Pseudomonadota</taxon>
        <taxon>Gammaproteobacteria</taxon>
        <taxon>Enterobacterales</taxon>
        <taxon>Yersiniaceae</taxon>
        <taxon>Yersinia</taxon>
    </lineage>
</organism>
<accession>A4TQV0</accession>
<evidence type="ECO:0000255" key="1">
    <source>
        <dbReference type="HAMAP-Rule" id="MF_00624"/>
    </source>
</evidence>
<protein>
    <recommendedName>
        <fullName evidence="1">Glucose-1-phosphate adenylyltransferase</fullName>
        <ecNumber evidence="1">2.7.7.27</ecNumber>
    </recommendedName>
    <alternativeName>
        <fullName evidence="1">ADP-glucose pyrophosphorylase</fullName>
        <shortName evidence="1">ADPGlc PPase</shortName>
    </alternativeName>
    <alternativeName>
        <fullName evidence="1">ADP-glucose synthase</fullName>
    </alternativeName>
</protein>